<protein>
    <recommendedName>
        <fullName>Uncharacterized protein MJ1358</fullName>
    </recommendedName>
</protein>
<keyword id="KW-1003">Cell membrane</keyword>
<keyword id="KW-0472">Membrane</keyword>
<keyword id="KW-1185">Reference proteome</keyword>
<keyword id="KW-0812">Transmembrane</keyword>
<keyword id="KW-1133">Transmembrane helix</keyword>
<accession>Q58753</accession>
<organism>
    <name type="scientific">Methanocaldococcus jannaschii (strain ATCC 43067 / DSM 2661 / JAL-1 / JCM 10045 / NBRC 100440)</name>
    <name type="common">Methanococcus jannaschii</name>
    <dbReference type="NCBI Taxonomy" id="243232"/>
    <lineage>
        <taxon>Archaea</taxon>
        <taxon>Methanobacteriati</taxon>
        <taxon>Methanobacteriota</taxon>
        <taxon>Methanomada group</taxon>
        <taxon>Methanococci</taxon>
        <taxon>Methanococcales</taxon>
        <taxon>Methanocaldococcaceae</taxon>
        <taxon>Methanocaldococcus</taxon>
    </lineage>
</organism>
<gene>
    <name type="ordered locus">MJ1358</name>
</gene>
<evidence type="ECO:0000255" key="1"/>
<evidence type="ECO:0000305" key="2"/>
<dbReference type="EMBL" id="L77117">
    <property type="protein sequence ID" value="AAB99377.1"/>
    <property type="molecule type" value="Genomic_DNA"/>
</dbReference>
<dbReference type="PIR" id="E64469">
    <property type="entry name" value="E64469"/>
</dbReference>
<dbReference type="SMR" id="Q58753"/>
<dbReference type="STRING" id="243232.MJ_1358"/>
<dbReference type="PaxDb" id="243232-MJ_1358"/>
<dbReference type="DNASU" id="1452260"/>
<dbReference type="EnsemblBacteria" id="AAB99377">
    <property type="protein sequence ID" value="AAB99377"/>
    <property type="gene ID" value="MJ_1358"/>
</dbReference>
<dbReference type="KEGG" id="mja:MJ_1358"/>
<dbReference type="eggNOG" id="arCOG12720">
    <property type="taxonomic scope" value="Archaea"/>
</dbReference>
<dbReference type="HOGENOM" id="CLU_1718223_0_0_2"/>
<dbReference type="InParanoid" id="Q58753"/>
<dbReference type="OrthoDB" id="379867at2157"/>
<dbReference type="Proteomes" id="UP000000805">
    <property type="component" value="Chromosome"/>
</dbReference>
<dbReference type="GO" id="GO:0005886">
    <property type="term" value="C:plasma membrane"/>
    <property type="evidence" value="ECO:0007669"/>
    <property type="project" value="UniProtKB-SubCell"/>
</dbReference>
<name>Y1358_METJA</name>
<feature type="chain" id="PRO_0000107296" description="Uncharacterized protein MJ1358">
    <location>
        <begin position="1"/>
        <end position="152"/>
    </location>
</feature>
<feature type="transmembrane region" description="Helical" evidence="1">
    <location>
        <begin position="2"/>
        <end position="22"/>
    </location>
</feature>
<feature type="transmembrane region" description="Helical" evidence="1">
    <location>
        <begin position="33"/>
        <end position="53"/>
    </location>
</feature>
<feature type="transmembrane region" description="Helical" evidence="1">
    <location>
        <begin position="58"/>
        <end position="78"/>
    </location>
</feature>
<feature type="transmembrane region" description="Helical" evidence="1">
    <location>
        <begin position="97"/>
        <end position="117"/>
    </location>
</feature>
<feature type="transmembrane region" description="Helical" evidence="1">
    <location>
        <begin position="122"/>
        <end position="142"/>
    </location>
</feature>
<reference key="1">
    <citation type="journal article" date="1996" name="Science">
        <title>Complete genome sequence of the methanogenic archaeon, Methanococcus jannaschii.</title>
        <authorList>
            <person name="Bult C.J."/>
            <person name="White O."/>
            <person name="Olsen G.J."/>
            <person name="Zhou L."/>
            <person name="Fleischmann R.D."/>
            <person name="Sutton G.G."/>
            <person name="Blake J.A."/>
            <person name="FitzGerald L.M."/>
            <person name="Clayton R.A."/>
            <person name="Gocayne J.D."/>
            <person name="Kerlavage A.R."/>
            <person name="Dougherty B.A."/>
            <person name="Tomb J.-F."/>
            <person name="Adams M.D."/>
            <person name="Reich C.I."/>
            <person name="Overbeek R."/>
            <person name="Kirkness E.F."/>
            <person name="Weinstock K.G."/>
            <person name="Merrick J.M."/>
            <person name="Glodek A."/>
            <person name="Scott J.L."/>
            <person name="Geoghagen N.S.M."/>
            <person name="Weidman J.F."/>
            <person name="Fuhrmann J.L."/>
            <person name="Nguyen D."/>
            <person name="Utterback T.R."/>
            <person name="Kelley J.M."/>
            <person name="Peterson J.D."/>
            <person name="Sadow P.W."/>
            <person name="Hanna M.C."/>
            <person name="Cotton M.D."/>
            <person name="Roberts K.M."/>
            <person name="Hurst M.A."/>
            <person name="Kaine B.P."/>
            <person name="Borodovsky M."/>
            <person name="Klenk H.-P."/>
            <person name="Fraser C.M."/>
            <person name="Smith H.O."/>
            <person name="Woese C.R."/>
            <person name="Venter J.C."/>
        </authorList>
    </citation>
    <scope>NUCLEOTIDE SEQUENCE [LARGE SCALE GENOMIC DNA]</scope>
    <source>
        <strain>ATCC 43067 / DSM 2661 / JAL-1 / JCM 10045 / NBRC 100440</strain>
    </source>
</reference>
<comment type="subcellular location">
    <subcellularLocation>
        <location evidence="2">Cell membrane</location>
        <topology evidence="2">Multi-pass membrane protein</topology>
    </subcellularLocation>
</comment>
<sequence length="152" mass="18007">MGVVFAFGFYLIFIKLTGLKLMDYFPRFKENRLKMIFSILSVILAFLINWLIMKNFSFLIEIIHPIASVWIFIILIYLLLRFLFLKRVPLSNYEKKFMGNMSAIAIFLELLKIIEYVDEHNIASPITVALVFFIPVVVFFNCKYFYEMELSS</sequence>
<proteinExistence type="predicted"/>